<reference key="1">
    <citation type="journal article" date="2002" name="Proc. Natl. Acad. Sci. U.S.A.">
        <title>Complete genome sequence of Clostridium perfringens, an anaerobic flesh-eater.</title>
        <authorList>
            <person name="Shimizu T."/>
            <person name="Ohtani K."/>
            <person name="Hirakawa H."/>
            <person name="Ohshima K."/>
            <person name="Yamashita A."/>
            <person name="Shiba T."/>
            <person name="Ogasawara N."/>
            <person name="Hattori M."/>
            <person name="Kuhara S."/>
            <person name="Hayashi H."/>
        </authorList>
    </citation>
    <scope>NUCLEOTIDE SEQUENCE [LARGE SCALE GENOMIC DNA]</scope>
    <source>
        <strain>13 / Type A</strain>
    </source>
</reference>
<organism>
    <name type="scientific">Clostridium perfringens (strain 13 / Type A)</name>
    <dbReference type="NCBI Taxonomy" id="195102"/>
    <lineage>
        <taxon>Bacteria</taxon>
        <taxon>Bacillati</taxon>
        <taxon>Bacillota</taxon>
        <taxon>Clostridia</taxon>
        <taxon>Eubacteriales</taxon>
        <taxon>Clostridiaceae</taxon>
        <taxon>Clostridium</taxon>
    </lineage>
</organism>
<dbReference type="EC" id="7.5.2.7" evidence="1"/>
<dbReference type="EMBL" id="BA000016">
    <property type="protein sequence ID" value="BAB81336.1"/>
    <property type="molecule type" value="Genomic_DNA"/>
</dbReference>
<dbReference type="RefSeq" id="WP_011010550.1">
    <property type="nucleotide sequence ID" value="NC_003366.1"/>
</dbReference>
<dbReference type="SMR" id="Q8XJX3"/>
<dbReference type="STRING" id="195102.gene:10490894"/>
<dbReference type="KEGG" id="cpe:CPE1630"/>
<dbReference type="HOGENOM" id="CLU_000604_92_2_9"/>
<dbReference type="Proteomes" id="UP000000818">
    <property type="component" value="Chromosome"/>
</dbReference>
<dbReference type="GO" id="GO:0005886">
    <property type="term" value="C:plasma membrane"/>
    <property type="evidence" value="ECO:0007669"/>
    <property type="project" value="UniProtKB-SubCell"/>
</dbReference>
<dbReference type="GO" id="GO:0015611">
    <property type="term" value="F:ABC-type D-ribose transporter activity"/>
    <property type="evidence" value="ECO:0007669"/>
    <property type="project" value="UniProtKB-EC"/>
</dbReference>
<dbReference type="GO" id="GO:0005524">
    <property type="term" value="F:ATP binding"/>
    <property type="evidence" value="ECO:0007669"/>
    <property type="project" value="UniProtKB-KW"/>
</dbReference>
<dbReference type="GO" id="GO:0016887">
    <property type="term" value="F:ATP hydrolysis activity"/>
    <property type="evidence" value="ECO:0007669"/>
    <property type="project" value="InterPro"/>
</dbReference>
<dbReference type="CDD" id="cd03216">
    <property type="entry name" value="ABC_Carb_Monos_I"/>
    <property type="match status" value="1"/>
</dbReference>
<dbReference type="CDD" id="cd03215">
    <property type="entry name" value="ABC_Carb_Monos_II"/>
    <property type="match status" value="1"/>
</dbReference>
<dbReference type="FunFam" id="3.40.50.300:FF:000126">
    <property type="entry name" value="Galactose/methyl galactoside import ATP-binding protein MglA"/>
    <property type="match status" value="1"/>
</dbReference>
<dbReference type="FunFam" id="3.40.50.300:FF:000127">
    <property type="entry name" value="Ribose import ATP-binding protein RbsA"/>
    <property type="match status" value="1"/>
</dbReference>
<dbReference type="Gene3D" id="3.40.50.300">
    <property type="entry name" value="P-loop containing nucleotide triphosphate hydrolases"/>
    <property type="match status" value="2"/>
</dbReference>
<dbReference type="InterPro" id="IPR003593">
    <property type="entry name" value="AAA+_ATPase"/>
</dbReference>
<dbReference type="InterPro" id="IPR050107">
    <property type="entry name" value="ABC_carbohydrate_import_ATPase"/>
</dbReference>
<dbReference type="InterPro" id="IPR003439">
    <property type="entry name" value="ABC_transporter-like_ATP-bd"/>
</dbReference>
<dbReference type="InterPro" id="IPR017871">
    <property type="entry name" value="ABC_transporter-like_CS"/>
</dbReference>
<dbReference type="InterPro" id="IPR027417">
    <property type="entry name" value="P-loop_NTPase"/>
</dbReference>
<dbReference type="PANTHER" id="PTHR43790">
    <property type="entry name" value="CARBOHYDRATE TRANSPORT ATP-BINDING PROTEIN MG119-RELATED"/>
    <property type="match status" value="1"/>
</dbReference>
<dbReference type="PANTHER" id="PTHR43790:SF3">
    <property type="entry name" value="D-ALLOSE IMPORT ATP-BINDING PROTEIN ALSA-RELATED"/>
    <property type="match status" value="1"/>
</dbReference>
<dbReference type="Pfam" id="PF00005">
    <property type="entry name" value="ABC_tran"/>
    <property type="match status" value="2"/>
</dbReference>
<dbReference type="SMART" id="SM00382">
    <property type="entry name" value="AAA"/>
    <property type="match status" value="2"/>
</dbReference>
<dbReference type="SUPFAM" id="SSF52540">
    <property type="entry name" value="P-loop containing nucleoside triphosphate hydrolases"/>
    <property type="match status" value="2"/>
</dbReference>
<dbReference type="PROSITE" id="PS00211">
    <property type="entry name" value="ABC_TRANSPORTER_1"/>
    <property type="match status" value="1"/>
</dbReference>
<dbReference type="PROSITE" id="PS50893">
    <property type="entry name" value="ABC_TRANSPORTER_2"/>
    <property type="match status" value="2"/>
</dbReference>
<dbReference type="PROSITE" id="PS51254">
    <property type="entry name" value="RBSA"/>
    <property type="match status" value="1"/>
</dbReference>
<gene>
    <name evidence="1" type="primary">rbsA</name>
    <name type="ordered locus">CPE1630</name>
</gene>
<name>RBSA_CLOPE</name>
<sequence length="501" mass="55556">MGERTPMLKMVGVSKSFPGVKALDNVSLMAYGGEVTALMGENGAGKSTLMKILSGVYKKDEGKIFIEGREVEVKGIKSAEEAGITIIHQELSVLNNLTISENIFLGNEKHSKFTGRINKKLLDERSKMFLEQIGCDIDPNRLVSTLNVGEKQMIEIAKALTKNARIIIMDEPTTALTDVETENLFKVIENLRKKGIAIIYISHRMEEIFKICHRVEVLRDGKYAGSAEIKDIDNDKLIAMMVGRTIEDQFPYRDVKKGDLALEVKNLSCKEGVKGASFTLRKGEILGIAGLMGSGRTELAKTIFGEYKRTSGEISLNGSPININCISDAINNGICYLSEDRKKEGCILGMSVGENMTLCNLKKYENKFKSLDKKEEAKDIEYYIKKINIKTPNKEQFIKNLSGGNQQKVILAKWLMLSPEVLIIDEPTRGIDVGAKKEIYELLNELKASGKAIIMISSDLPEVLGISDRIMVMSEGRISGELNRDEANQESIMKLAVGINN</sequence>
<comment type="function">
    <text evidence="1">Part of the ABC transporter complex RbsABC involved in ribose import. Responsible for energy coupling to the transport system.</text>
</comment>
<comment type="catalytic activity">
    <reaction evidence="1">
        <text>D-ribose(out) + ATP + H2O = D-ribose(in) + ADP + phosphate + H(+)</text>
        <dbReference type="Rhea" id="RHEA:29903"/>
        <dbReference type="ChEBI" id="CHEBI:15377"/>
        <dbReference type="ChEBI" id="CHEBI:15378"/>
        <dbReference type="ChEBI" id="CHEBI:30616"/>
        <dbReference type="ChEBI" id="CHEBI:43474"/>
        <dbReference type="ChEBI" id="CHEBI:47013"/>
        <dbReference type="ChEBI" id="CHEBI:456216"/>
        <dbReference type="EC" id="7.5.2.7"/>
    </reaction>
</comment>
<comment type="subunit">
    <text evidence="1">The complex is composed of an ATP-binding protein (RbsA), two transmembrane proteins (RbsC) and a solute-binding protein (RbsB).</text>
</comment>
<comment type="subcellular location">
    <subcellularLocation>
        <location evidence="1">Cell membrane</location>
        <topology evidence="1">Peripheral membrane protein</topology>
    </subcellularLocation>
</comment>
<comment type="similarity">
    <text evidence="1">Belongs to the ABC transporter superfamily. Ribose importer (TC 3.A.1.2.1) family.</text>
</comment>
<feature type="chain" id="PRO_0000261056" description="Ribose import ATP-binding protein RbsA">
    <location>
        <begin position="1"/>
        <end position="501"/>
    </location>
</feature>
<feature type="domain" description="ABC transporter 1" evidence="1">
    <location>
        <begin position="8"/>
        <end position="245"/>
    </location>
</feature>
<feature type="domain" description="ABC transporter 2" evidence="1">
    <location>
        <begin position="255"/>
        <end position="500"/>
    </location>
</feature>
<feature type="binding site" evidence="1">
    <location>
        <begin position="40"/>
        <end position="47"/>
    </location>
    <ligand>
        <name>ATP</name>
        <dbReference type="ChEBI" id="CHEBI:30616"/>
    </ligand>
</feature>
<protein>
    <recommendedName>
        <fullName evidence="1">Ribose import ATP-binding protein RbsA</fullName>
        <ecNumber evidence="1">7.5.2.7</ecNumber>
    </recommendedName>
</protein>
<evidence type="ECO:0000255" key="1">
    <source>
        <dbReference type="HAMAP-Rule" id="MF_01716"/>
    </source>
</evidence>
<accession>Q8XJX3</accession>
<keyword id="KW-0067">ATP-binding</keyword>
<keyword id="KW-1003">Cell membrane</keyword>
<keyword id="KW-0472">Membrane</keyword>
<keyword id="KW-0547">Nucleotide-binding</keyword>
<keyword id="KW-1185">Reference proteome</keyword>
<keyword id="KW-0677">Repeat</keyword>
<keyword id="KW-0762">Sugar transport</keyword>
<keyword id="KW-1278">Translocase</keyword>
<keyword id="KW-0813">Transport</keyword>
<proteinExistence type="inferred from homology"/>